<dbReference type="EC" id="1.5.1.5" evidence="1"/>
<dbReference type="EC" id="3.5.4.9" evidence="1"/>
<dbReference type="EMBL" id="AP006627">
    <property type="protein sequence ID" value="BAD65921.1"/>
    <property type="molecule type" value="Genomic_DNA"/>
</dbReference>
<dbReference type="RefSeq" id="WP_011248227.1">
    <property type="nucleotide sequence ID" value="NC_006582.1"/>
</dbReference>
<dbReference type="SMR" id="Q5WCI9"/>
<dbReference type="STRING" id="66692.ABC3388"/>
<dbReference type="KEGG" id="bcl:ABC3388"/>
<dbReference type="eggNOG" id="COG0190">
    <property type="taxonomic scope" value="Bacteria"/>
</dbReference>
<dbReference type="HOGENOM" id="CLU_034045_2_1_9"/>
<dbReference type="OrthoDB" id="9803580at2"/>
<dbReference type="UniPathway" id="UPA00193"/>
<dbReference type="Proteomes" id="UP000001168">
    <property type="component" value="Chromosome"/>
</dbReference>
<dbReference type="GO" id="GO:0005829">
    <property type="term" value="C:cytosol"/>
    <property type="evidence" value="ECO:0007669"/>
    <property type="project" value="TreeGrafter"/>
</dbReference>
<dbReference type="GO" id="GO:0004477">
    <property type="term" value="F:methenyltetrahydrofolate cyclohydrolase activity"/>
    <property type="evidence" value="ECO:0007669"/>
    <property type="project" value="UniProtKB-UniRule"/>
</dbReference>
<dbReference type="GO" id="GO:0004488">
    <property type="term" value="F:methylenetetrahydrofolate dehydrogenase (NADP+) activity"/>
    <property type="evidence" value="ECO:0007669"/>
    <property type="project" value="UniProtKB-UniRule"/>
</dbReference>
<dbReference type="GO" id="GO:0000105">
    <property type="term" value="P:L-histidine biosynthetic process"/>
    <property type="evidence" value="ECO:0007669"/>
    <property type="project" value="UniProtKB-KW"/>
</dbReference>
<dbReference type="GO" id="GO:0009086">
    <property type="term" value="P:methionine biosynthetic process"/>
    <property type="evidence" value="ECO:0007669"/>
    <property type="project" value="UniProtKB-KW"/>
</dbReference>
<dbReference type="GO" id="GO:0006164">
    <property type="term" value="P:purine nucleotide biosynthetic process"/>
    <property type="evidence" value="ECO:0007669"/>
    <property type="project" value="UniProtKB-KW"/>
</dbReference>
<dbReference type="GO" id="GO:0035999">
    <property type="term" value="P:tetrahydrofolate interconversion"/>
    <property type="evidence" value="ECO:0007669"/>
    <property type="project" value="UniProtKB-UniRule"/>
</dbReference>
<dbReference type="CDD" id="cd01080">
    <property type="entry name" value="NAD_bind_m-THF_DH_Cyclohyd"/>
    <property type="match status" value="1"/>
</dbReference>
<dbReference type="FunFam" id="3.40.50.720:FF:000094">
    <property type="entry name" value="Bifunctional protein FolD"/>
    <property type="match status" value="1"/>
</dbReference>
<dbReference type="FunFam" id="3.40.50.10860:FF:000005">
    <property type="entry name" value="C-1-tetrahydrofolate synthase, cytoplasmic, putative"/>
    <property type="match status" value="1"/>
</dbReference>
<dbReference type="Gene3D" id="3.40.50.10860">
    <property type="entry name" value="Leucine Dehydrogenase, chain A, domain 1"/>
    <property type="match status" value="1"/>
</dbReference>
<dbReference type="Gene3D" id="3.40.50.720">
    <property type="entry name" value="NAD(P)-binding Rossmann-like Domain"/>
    <property type="match status" value="1"/>
</dbReference>
<dbReference type="HAMAP" id="MF_01576">
    <property type="entry name" value="THF_DHG_CYH"/>
    <property type="match status" value="1"/>
</dbReference>
<dbReference type="InterPro" id="IPR046346">
    <property type="entry name" value="Aminoacid_DH-like_N_sf"/>
</dbReference>
<dbReference type="InterPro" id="IPR036291">
    <property type="entry name" value="NAD(P)-bd_dom_sf"/>
</dbReference>
<dbReference type="InterPro" id="IPR000672">
    <property type="entry name" value="THF_DH/CycHdrlase"/>
</dbReference>
<dbReference type="InterPro" id="IPR020630">
    <property type="entry name" value="THF_DH/CycHdrlase_cat_dom"/>
</dbReference>
<dbReference type="InterPro" id="IPR020631">
    <property type="entry name" value="THF_DH/CycHdrlase_NAD-bd_dom"/>
</dbReference>
<dbReference type="PANTHER" id="PTHR48099:SF5">
    <property type="entry name" value="C-1-TETRAHYDROFOLATE SYNTHASE, CYTOPLASMIC"/>
    <property type="match status" value="1"/>
</dbReference>
<dbReference type="PANTHER" id="PTHR48099">
    <property type="entry name" value="C-1-TETRAHYDROFOLATE SYNTHASE, CYTOPLASMIC-RELATED"/>
    <property type="match status" value="1"/>
</dbReference>
<dbReference type="Pfam" id="PF00763">
    <property type="entry name" value="THF_DHG_CYH"/>
    <property type="match status" value="1"/>
</dbReference>
<dbReference type="Pfam" id="PF02882">
    <property type="entry name" value="THF_DHG_CYH_C"/>
    <property type="match status" value="1"/>
</dbReference>
<dbReference type="PRINTS" id="PR00085">
    <property type="entry name" value="THFDHDRGNASE"/>
</dbReference>
<dbReference type="SUPFAM" id="SSF53223">
    <property type="entry name" value="Aminoacid dehydrogenase-like, N-terminal domain"/>
    <property type="match status" value="1"/>
</dbReference>
<dbReference type="SUPFAM" id="SSF51735">
    <property type="entry name" value="NAD(P)-binding Rossmann-fold domains"/>
    <property type="match status" value="1"/>
</dbReference>
<evidence type="ECO:0000255" key="1">
    <source>
        <dbReference type="HAMAP-Rule" id="MF_01576"/>
    </source>
</evidence>
<accession>Q5WCI9</accession>
<proteinExistence type="inferred from homology"/>
<keyword id="KW-0028">Amino-acid biosynthesis</keyword>
<keyword id="KW-0368">Histidine biosynthesis</keyword>
<keyword id="KW-0378">Hydrolase</keyword>
<keyword id="KW-0486">Methionine biosynthesis</keyword>
<keyword id="KW-0511">Multifunctional enzyme</keyword>
<keyword id="KW-0521">NADP</keyword>
<keyword id="KW-0554">One-carbon metabolism</keyword>
<keyword id="KW-0560">Oxidoreductase</keyword>
<keyword id="KW-0658">Purine biosynthesis</keyword>
<keyword id="KW-1185">Reference proteome</keyword>
<feature type="chain" id="PRO_0000268269" description="Bifunctional protein FolD">
    <location>
        <begin position="1"/>
        <end position="279"/>
    </location>
</feature>
<feature type="binding site" evidence="1">
    <location>
        <begin position="166"/>
        <end position="168"/>
    </location>
    <ligand>
        <name>NADP(+)</name>
        <dbReference type="ChEBI" id="CHEBI:58349"/>
    </ligand>
</feature>
<feature type="binding site" evidence="1">
    <location>
        <position position="191"/>
    </location>
    <ligand>
        <name>NADP(+)</name>
        <dbReference type="ChEBI" id="CHEBI:58349"/>
    </ligand>
</feature>
<gene>
    <name evidence="1" type="primary">folD</name>
    <name type="ordered locus">ABC3388</name>
</gene>
<protein>
    <recommendedName>
        <fullName evidence="1">Bifunctional protein FolD</fullName>
    </recommendedName>
    <domain>
        <recommendedName>
            <fullName evidence="1">Methylenetetrahydrofolate dehydrogenase</fullName>
            <ecNumber evidence="1">1.5.1.5</ecNumber>
        </recommendedName>
    </domain>
    <domain>
        <recommendedName>
            <fullName evidence="1">Methenyltetrahydrofolate cyclohydrolase</fullName>
            <ecNumber evidence="1">3.5.4.9</ecNumber>
        </recommendedName>
    </domain>
</protein>
<name>FOLD_SHOC1</name>
<comment type="function">
    <text evidence="1">Catalyzes the oxidation of 5,10-methylenetetrahydrofolate to 5,10-methenyltetrahydrofolate and then the hydrolysis of 5,10-methenyltetrahydrofolate to 10-formyltetrahydrofolate.</text>
</comment>
<comment type="catalytic activity">
    <reaction evidence="1">
        <text>(6R)-5,10-methylene-5,6,7,8-tetrahydrofolate + NADP(+) = (6R)-5,10-methenyltetrahydrofolate + NADPH</text>
        <dbReference type="Rhea" id="RHEA:22812"/>
        <dbReference type="ChEBI" id="CHEBI:15636"/>
        <dbReference type="ChEBI" id="CHEBI:57455"/>
        <dbReference type="ChEBI" id="CHEBI:57783"/>
        <dbReference type="ChEBI" id="CHEBI:58349"/>
        <dbReference type="EC" id="1.5.1.5"/>
    </reaction>
</comment>
<comment type="catalytic activity">
    <reaction evidence="1">
        <text>(6R)-5,10-methenyltetrahydrofolate + H2O = (6R)-10-formyltetrahydrofolate + H(+)</text>
        <dbReference type="Rhea" id="RHEA:23700"/>
        <dbReference type="ChEBI" id="CHEBI:15377"/>
        <dbReference type="ChEBI" id="CHEBI:15378"/>
        <dbReference type="ChEBI" id="CHEBI:57455"/>
        <dbReference type="ChEBI" id="CHEBI:195366"/>
        <dbReference type="EC" id="3.5.4.9"/>
    </reaction>
</comment>
<comment type="pathway">
    <text evidence="1">One-carbon metabolism; tetrahydrofolate interconversion.</text>
</comment>
<comment type="subunit">
    <text evidence="1">Homodimer.</text>
</comment>
<comment type="similarity">
    <text evidence="1">Belongs to the tetrahydrofolate dehydrogenase/cyclohydrolase family.</text>
</comment>
<reference key="1">
    <citation type="submission" date="2003-10" db="EMBL/GenBank/DDBJ databases">
        <title>The complete genome sequence of the alkaliphilic Bacillus clausii KSM-K16.</title>
        <authorList>
            <person name="Takaki Y."/>
            <person name="Kageyama Y."/>
            <person name="Shimamura S."/>
            <person name="Suzuki H."/>
            <person name="Nishi S."/>
            <person name="Hatada Y."/>
            <person name="Kawai S."/>
            <person name="Ito S."/>
            <person name="Horikoshi K."/>
        </authorList>
    </citation>
    <scope>NUCLEOTIDE SEQUENCE [LARGE SCALE GENOMIC DNA]</scope>
    <source>
        <strain>KSM-K16</strain>
    </source>
</reference>
<sequence>MAEPMILDGNDVSKRIKDKLALQVAALEQKGVRPCLATILVGDDPASATYVRMKGNACKRLGIESKKIELPKETTTKELLAVIRELNNDSSVHGILLQHPVPSQIDERAAFDEIAIEKDVDGVTTLGFAQNAFGFAHYPSCTPAAILAILDHYQLPIEGKHAVVVGRSPILGKPVSQMLLNRNATVTICHSRTENVSDFVEKADIVVAAVGKPNFIQGEWIKSGAVVLDAGYNKGNIGDCEYDGCAQRASAITPVPGGVGPVTISMLLKHTVEAAERSV</sequence>
<organism>
    <name type="scientific">Shouchella clausii (strain KSM-K16)</name>
    <name type="common">Alkalihalobacillus clausii</name>
    <dbReference type="NCBI Taxonomy" id="66692"/>
    <lineage>
        <taxon>Bacteria</taxon>
        <taxon>Bacillati</taxon>
        <taxon>Bacillota</taxon>
        <taxon>Bacilli</taxon>
        <taxon>Bacillales</taxon>
        <taxon>Bacillaceae</taxon>
        <taxon>Shouchella</taxon>
    </lineage>
</organism>